<evidence type="ECO:0000250" key="1">
    <source>
        <dbReference type="UniProtKB" id="O00483"/>
    </source>
</evidence>
<evidence type="ECO:0000305" key="2"/>
<gene>
    <name type="primary">ndufa4</name>
    <name type="ORF">zgc:73405</name>
</gene>
<protein>
    <recommendedName>
        <fullName>Cytochrome c oxidase subunit NDUFA4</fullName>
    </recommendedName>
</protein>
<accession>Q6PBH5</accession>
<proteinExistence type="inferred from homology"/>
<comment type="function">
    <text evidence="1">Component of the cytochrome c oxidase, the last enzyme in the mitochondrial electron transport chain which drives oxidative phosphorylation. The respiratory chain contains 3 multisubunit complexes succinate dehydrogenase (complex II, CII), ubiquinol-cytochrome c oxidoreductase (cytochrome b-c1 complex, complex III, CIII) and cytochrome c oxidase (complex IV, CIV), that cooperate to transfer electrons derived from NADH and succinate to molecular oxygen, creating an electrochemical gradient over the inner membrane that drives transmembrane transport and the ATP synthase. Cytochrome c oxidase is the component of the respiratory chain that catalyzes the reduction of oxygen to water. Electrons originating from reduced cytochrome c in the intermembrane space (IMS) are transferred via the dinuclear copper A center (CU(A)) of subunit 2 and heme A of subunit 1 to the active site in subunit 1, a binuclear center (BNC) formed by heme A3 and copper B (CU(B)). The BNC reduces molecular oxygen to 2 water molecules unsing 4 electrons from cytochrome c in the IMS and 4 protons from the mitochondrial matrix. NDUFA4 is required for complex IV maintenance.</text>
</comment>
<comment type="subunit">
    <text evidence="1">Component of the cytochrome c oxidase (complex IV, CIV), a multisubunit enzyme composed of 14 subunits. The complex is composed of a catalytic core of 3 subunits MT-CO1, MT-CO2 and MT-CO3, encoded in the mitochondrial DNA, and 11 supernumerary subunits COX4I, COX5A, COX5B, COX6A, COX6B, COX6C, COX7A, COX7B, COX7C, COX8 and NDUFA4, which are encoded in the nuclear genome. The complex exists as a monomer or a dimer and forms supercomplexes (SCs) in the inner mitochondrial membrane with NADH-ubiquinone oxidoreductase (complex I, CI) and ubiquinol-cytochrome c oxidoreductase (cytochrome b-c1 complex, complex III, CIII), resulting in different assemblies (supercomplex SCI(1)III(2)IV(1) and megacomplex MCI(2)III(2)IV(2)) (By similarity). Interacts with RAB5IF (By similarity).</text>
</comment>
<comment type="subcellular location">
    <subcellularLocation>
        <location evidence="1">Mitochondrion inner membrane</location>
        <topology evidence="1">Single-pass membrane protein</topology>
    </subcellularLocation>
</comment>
<comment type="similarity">
    <text evidence="2">Belongs to the complex IV NDUFA4 subunit family.</text>
</comment>
<organism>
    <name type="scientific">Danio rerio</name>
    <name type="common">Zebrafish</name>
    <name type="synonym">Brachydanio rerio</name>
    <dbReference type="NCBI Taxonomy" id="7955"/>
    <lineage>
        <taxon>Eukaryota</taxon>
        <taxon>Metazoa</taxon>
        <taxon>Chordata</taxon>
        <taxon>Craniata</taxon>
        <taxon>Vertebrata</taxon>
        <taxon>Euteleostomi</taxon>
        <taxon>Actinopterygii</taxon>
        <taxon>Neopterygii</taxon>
        <taxon>Teleostei</taxon>
        <taxon>Ostariophysi</taxon>
        <taxon>Cypriniformes</taxon>
        <taxon>Danionidae</taxon>
        <taxon>Danioninae</taxon>
        <taxon>Danio</taxon>
    </lineage>
</organism>
<reference key="1">
    <citation type="submission" date="2003-10" db="EMBL/GenBank/DDBJ databases">
        <authorList>
            <consortium name="NIH - Zebrafish Gene Collection (ZGC) project"/>
        </authorList>
    </citation>
    <scope>NUCLEOTIDE SEQUENCE [LARGE SCALE MRNA]</scope>
    <source>
        <tissue>Eye</tissue>
    </source>
</reference>
<feature type="chain" id="PRO_0000245770" description="Cytochrome c oxidase subunit NDUFA4">
    <location>
        <begin position="1"/>
        <end position="82"/>
    </location>
</feature>
<feature type="topological domain" description="Mitochondrial matrix" evidence="1">
    <location>
        <begin position="1"/>
        <end position="14"/>
    </location>
</feature>
<feature type="transmembrane region" description="Helical" evidence="1">
    <location>
        <begin position="15"/>
        <end position="37"/>
    </location>
</feature>
<feature type="topological domain" description="Mitochondrial intermembrane" evidence="1">
    <location>
        <begin position="38"/>
        <end position="82"/>
    </location>
</feature>
<name>NDUA4_DANRE</name>
<dbReference type="EMBL" id="BC059706">
    <property type="protein sequence ID" value="AAH59706.1"/>
    <property type="molecule type" value="mRNA"/>
</dbReference>
<dbReference type="RefSeq" id="NP_998190.1">
    <property type="nucleotide sequence ID" value="NM_213025.1"/>
</dbReference>
<dbReference type="SMR" id="Q6PBH5"/>
<dbReference type="FunCoup" id="Q6PBH5">
    <property type="interactions" value="1722"/>
</dbReference>
<dbReference type="STRING" id="7955.ENSDARP00000055018"/>
<dbReference type="PaxDb" id="7955-ENSDARP00000055018"/>
<dbReference type="Ensembl" id="ENSDART00000055019">
    <property type="protein sequence ID" value="ENSDARP00000055018"/>
    <property type="gene ID" value="ENSDARG00000056108"/>
</dbReference>
<dbReference type="Ensembl" id="ENSDART00000182410">
    <property type="protein sequence ID" value="ENSDARP00000155008"/>
    <property type="gene ID" value="ENSDARG00000116304"/>
</dbReference>
<dbReference type="GeneID" id="406298"/>
<dbReference type="KEGG" id="dre:406298"/>
<dbReference type="AGR" id="ZFIN:ZDB-GENE-040426-1962"/>
<dbReference type="CTD" id="406298"/>
<dbReference type="ZFIN" id="ZDB-GENE-040426-1962">
    <property type="gene designation" value="ndufa4b"/>
</dbReference>
<dbReference type="eggNOG" id="ENOG502S65P">
    <property type="taxonomic scope" value="Eukaryota"/>
</dbReference>
<dbReference type="HOGENOM" id="CLU_181002_0_0_1"/>
<dbReference type="InParanoid" id="Q6PBH5"/>
<dbReference type="OMA" id="PWQEYAD"/>
<dbReference type="OrthoDB" id="5511684at2759"/>
<dbReference type="PhylomeDB" id="Q6PBH5"/>
<dbReference type="TreeFam" id="TF106383"/>
<dbReference type="Reactome" id="R-DRE-5628897">
    <property type="pathway name" value="TP53 Regulates Metabolic Genes"/>
</dbReference>
<dbReference type="Reactome" id="R-DRE-611105">
    <property type="pathway name" value="Respiratory electron transport"/>
</dbReference>
<dbReference type="Reactome" id="R-DRE-9707564">
    <property type="pathway name" value="Cytoprotection by HMOX1"/>
</dbReference>
<dbReference type="PRO" id="PR:Q6PBH5"/>
<dbReference type="Proteomes" id="UP000000437">
    <property type="component" value="Alternate scaffold 12"/>
</dbReference>
<dbReference type="Proteomes" id="UP000000437">
    <property type="component" value="Chromosome 12"/>
</dbReference>
<dbReference type="Bgee" id="ENSDARG00000056108">
    <property type="expression patterns" value="Expressed in heart and 24 other cell types or tissues"/>
</dbReference>
<dbReference type="GO" id="GO:0005743">
    <property type="term" value="C:mitochondrial inner membrane"/>
    <property type="evidence" value="ECO:0007669"/>
    <property type="project" value="UniProtKB-SubCell"/>
</dbReference>
<dbReference type="GO" id="GO:0045277">
    <property type="term" value="C:respiratory chain complex IV"/>
    <property type="evidence" value="ECO:0000250"/>
    <property type="project" value="UniProtKB"/>
</dbReference>
<dbReference type="InterPro" id="IPR010530">
    <property type="entry name" value="B12D"/>
</dbReference>
<dbReference type="PANTHER" id="PTHR14256:SF4">
    <property type="entry name" value="CYTOCHROME C OXIDASE SUBUNIT NDUFA4"/>
    <property type="match status" value="1"/>
</dbReference>
<dbReference type="PANTHER" id="PTHR14256">
    <property type="entry name" value="NADH-UBIQUINONE OXIDOREDUCTASE MLRQ SUBUNIT"/>
    <property type="match status" value="1"/>
</dbReference>
<dbReference type="Pfam" id="PF06522">
    <property type="entry name" value="B12D"/>
    <property type="match status" value="1"/>
</dbReference>
<sequence length="82" mass="9417">MLATVMKQLKSHPALIPLFIFIGGGATMSMLYLGRLALKNPDCSWDRKNNPEPWNKLGPNDQYKLFSVNMDYSKLKKDRPDF</sequence>
<keyword id="KW-0249">Electron transport</keyword>
<keyword id="KW-0472">Membrane</keyword>
<keyword id="KW-0496">Mitochondrion</keyword>
<keyword id="KW-0999">Mitochondrion inner membrane</keyword>
<keyword id="KW-1185">Reference proteome</keyword>
<keyword id="KW-0679">Respiratory chain</keyword>
<keyword id="KW-0812">Transmembrane</keyword>
<keyword id="KW-1133">Transmembrane helix</keyword>
<keyword id="KW-0813">Transport</keyword>